<feature type="signal peptide" evidence="1">
    <location>
        <begin position="1"/>
        <end position="24"/>
    </location>
</feature>
<feature type="chain" id="PRO_0000035888" description="5,6-dihydroxyindole-2-carboxylic acid oxidase">
    <location>
        <begin position="25"/>
        <end position="537"/>
    </location>
</feature>
<feature type="topological domain" description="Lumenal, melanosome" evidence="4">
    <location>
        <begin position="25"/>
        <end position="477"/>
    </location>
</feature>
<feature type="transmembrane region" description="Helical" evidence="4">
    <location>
        <begin position="478"/>
        <end position="501"/>
    </location>
</feature>
<feature type="topological domain" description="Cytoplasmic" evidence="4">
    <location>
        <begin position="502"/>
        <end position="537"/>
    </location>
</feature>
<feature type="binding site" evidence="3">
    <location>
        <position position="192"/>
    </location>
    <ligand>
        <name>Zn(2+)</name>
        <dbReference type="ChEBI" id="CHEBI:29105"/>
        <label>A</label>
    </ligand>
</feature>
<feature type="binding site" evidence="3">
    <location>
        <position position="215"/>
    </location>
    <ligand>
        <name>Zn(2+)</name>
        <dbReference type="ChEBI" id="CHEBI:29105"/>
        <label>A</label>
    </ligand>
</feature>
<feature type="binding site" evidence="3">
    <location>
        <position position="224"/>
    </location>
    <ligand>
        <name>Zn(2+)</name>
        <dbReference type="ChEBI" id="CHEBI:29105"/>
        <label>A</label>
    </ligand>
</feature>
<feature type="binding site" evidence="3">
    <location>
        <position position="377"/>
    </location>
    <ligand>
        <name>Zn(2+)</name>
        <dbReference type="ChEBI" id="CHEBI:29105"/>
        <label>B</label>
    </ligand>
</feature>
<feature type="binding site" evidence="3">
    <location>
        <position position="381"/>
    </location>
    <ligand>
        <name>Zn(2+)</name>
        <dbReference type="ChEBI" id="CHEBI:29105"/>
        <label>B</label>
    </ligand>
</feature>
<feature type="binding site" evidence="3">
    <location>
        <position position="404"/>
    </location>
    <ligand>
        <name>Zn(2+)</name>
        <dbReference type="ChEBI" id="CHEBI:29105"/>
        <label>B</label>
    </ligand>
</feature>
<feature type="glycosylation site" description="N-linked (GlcNAc...) asparagine" evidence="4">
    <location>
        <position position="96"/>
    </location>
</feature>
<feature type="glycosylation site" description="N-linked (GlcNAc...) asparagine" evidence="4">
    <location>
        <position position="104"/>
    </location>
</feature>
<feature type="glycosylation site" description="N-linked (GlcNAc...) asparagine" evidence="4">
    <location>
        <position position="181"/>
    </location>
</feature>
<feature type="glycosylation site" description="N-linked (GlcNAc...) asparagine" evidence="4">
    <location>
        <position position="304"/>
    </location>
</feature>
<feature type="glycosylation site" description="N-linked (GlcNAc...) asparagine" evidence="4">
    <location>
        <position position="350"/>
    </location>
</feature>
<feature type="glycosylation site" description="N-linked (GlcNAc...) asparagine" evidence="4">
    <location>
        <position position="385"/>
    </location>
</feature>
<feature type="disulfide bond" evidence="3">
    <location>
        <begin position="30"/>
        <end position="41"/>
    </location>
</feature>
<feature type="disulfide bond" evidence="3">
    <location>
        <begin position="42"/>
        <end position="65"/>
    </location>
</feature>
<feature type="disulfide bond" evidence="3">
    <location>
        <begin position="56"/>
        <end position="99"/>
    </location>
</feature>
<feature type="disulfide bond" evidence="3">
    <location>
        <begin position="101"/>
        <end position="110"/>
    </location>
</feature>
<feature type="disulfide bond" evidence="3">
    <location>
        <begin position="113"/>
        <end position="122"/>
    </location>
</feature>
<feature type="disulfide bond" evidence="3">
    <location>
        <begin position="258"/>
        <end position="261"/>
    </location>
</feature>
<feature type="disulfide bond" evidence="3">
    <location>
        <begin position="290"/>
        <end position="303"/>
    </location>
</feature>
<name>TYRP1_BOVIN</name>
<organism>
    <name type="scientific">Bos taurus</name>
    <name type="common">Bovine</name>
    <dbReference type="NCBI Taxonomy" id="9913"/>
    <lineage>
        <taxon>Eukaryota</taxon>
        <taxon>Metazoa</taxon>
        <taxon>Chordata</taxon>
        <taxon>Craniata</taxon>
        <taxon>Vertebrata</taxon>
        <taxon>Euteleostomi</taxon>
        <taxon>Mammalia</taxon>
        <taxon>Eutheria</taxon>
        <taxon>Laurasiatheria</taxon>
        <taxon>Artiodactyla</taxon>
        <taxon>Ruminantia</taxon>
        <taxon>Pecora</taxon>
        <taxon>Bovidae</taxon>
        <taxon>Bovinae</taxon>
        <taxon>Bos</taxon>
    </lineage>
</organism>
<dbReference type="EC" id="1.14.18.-"/>
<dbReference type="EMBL" id="AF445638">
    <property type="protein sequence ID" value="AAL38167.2"/>
    <property type="molecule type" value="mRNA"/>
</dbReference>
<dbReference type="RefSeq" id="NP_776905.2">
    <property type="nucleotide sequence ID" value="NM_174480.3"/>
</dbReference>
<dbReference type="SMR" id="Q8WN57"/>
<dbReference type="FunCoup" id="Q8WN57">
    <property type="interactions" value="7"/>
</dbReference>
<dbReference type="STRING" id="9913.ENSBTAP00000027945"/>
<dbReference type="GlyCosmos" id="Q8WN57">
    <property type="glycosylation" value="6 sites, No reported glycans"/>
</dbReference>
<dbReference type="GlyGen" id="Q8WN57">
    <property type="glycosylation" value="6 sites"/>
</dbReference>
<dbReference type="PaxDb" id="9913-ENSBTAP00000027945"/>
<dbReference type="GeneID" id="282105"/>
<dbReference type="KEGG" id="bta:282105"/>
<dbReference type="CTD" id="7306"/>
<dbReference type="eggNOG" id="ENOG502QRNA">
    <property type="taxonomic scope" value="Eukaryota"/>
</dbReference>
<dbReference type="InParanoid" id="Q8WN57"/>
<dbReference type="OrthoDB" id="6132182at2759"/>
<dbReference type="UniPathway" id="UPA00785"/>
<dbReference type="Proteomes" id="UP000009136">
    <property type="component" value="Unplaced"/>
</dbReference>
<dbReference type="GO" id="GO:0005737">
    <property type="term" value="C:cytoplasm"/>
    <property type="evidence" value="ECO:0000250"/>
    <property type="project" value="UniProtKB"/>
</dbReference>
<dbReference type="GO" id="GO:0097708">
    <property type="term" value="C:intracellular vesicle"/>
    <property type="evidence" value="ECO:0000250"/>
    <property type="project" value="UniProtKB"/>
</dbReference>
<dbReference type="GO" id="GO:0042470">
    <property type="term" value="C:melanosome"/>
    <property type="evidence" value="ECO:0000250"/>
    <property type="project" value="UniProtKB"/>
</dbReference>
<dbReference type="GO" id="GO:0033162">
    <property type="term" value="C:melanosome membrane"/>
    <property type="evidence" value="ECO:0000250"/>
    <property type="project" value="UniProtKB"/>
</dbReference>
<dbReference type="GO" id="GO:0046872">
    <property type="term" value="F:metal ion binding"/>
    <property type="evidence" value="ECO:0007669"/>
    <property type="project" value="UniProtKB-KW"/>
</dbReference>
<dbReference type="GO" id="GO:0042803">
    <property type="term" value="F:protein homodimerization activity"/>
    <property type="evidence" value="ECO:0000250"/>
    <property type="project" value="UniProtKB"/>
</dbReference>
<dbReference type="GO" id="GO:0004503">
    <property type="term" value="F:tyrosinase activity"/>
    <property type="evidence" value="ECO:0000250"/>
    <property type="project" value="UniProtKB"/>
</dbReference>
<dbReference type="GO" id="GO:0042438">
    <property type="term" value="P:melanin biosynthetic process"/>
    <property type="evidence" value="ECO:0007669"/>
    <property type="project" value="UniProtKB-UniPathway"/>
</dbReference>
<dbReference type="GO" id="GO:0030318">
    <property type="term" value="P:melanocyte differentiation"/>
    <property type="evidence" value="ECO:0000318"/>
    <property type="project" value="GO_Central"/>
</dbReference>
<dbReference type="GO" id="GO:0032438">
    <property type="term" value="P:melanosome organization"/>
    <property type="evidence" value="ECO:0000318"/>
    <property type="project" value="GO_Central"/>
</dbReference>
<dbReference type="FunFam" id="1.10.1280.10:FF:000001">
    <property type="entry name" value="5,6-dihydroxyindole-2-carboxylic acid oxidase"/>
    <property type="match status" value="1"/>
</dbReference>
<dbReference type="Gene3D" id="1.10.1280.10">
    <property type="entry name" value="Di-copper center containing domain from catechol oxidase"/>
    <property type="match status" value="1"/>
</dbReference>
<dbReference type="InterPro" id="IPR008922">
    <property type="entry name" value="Di-copper_centre_dom_sf"/>
</dbReference>
<dbReference type="InterPro" id="IPR050316">
    <property type="entry name" value="Tyrosinase/Hemocyanin"/>
</dbReference>
<dbReference type="InterPro" id="IPR002227">
    <property type="entry name" value="Tyrosinase_Cu-bd"/>
</dbReference>
<dbReference type="PANTHER" id="PTHR11474:SF3">
    <property type="entry name" value="5,6-DIHYDROXYINDOLE-2-CARBOXYLIC ACID OXIDASE"/>
    <property type="match status" value="1"/>
</dbReference>
<dbReference type="PANTHER" id="PTHR11474">
    <property type="entry name" value="TYROSINASE FAMILY MEMBER"/>
    <property type="match status" value="1"/>
</dbReference>
<dbReference type="Pfam" id="PF00264">
    <property type="entry name" value="Tyrosinase"/>
    <property type="match status" value="1"/>
</dbReference>
<dbReference type="PRINTS" id="PR00092">
    <property type="entry name" value="TYROSINASE"/>
</dbReference>
<dbReference type="SUPFAM" id="SSF48056">
    <property type="entry name" value="Di-copper centre-containing domain"/>
    <property type="match status" value="1"/>
</dbReference>
<dbReference type="PROSITE" id="PS00497">
    <property type="entry name" value="TYROSINASE_1"/>
    <property type="match status" value="1"/>
</dbReference>
<dbReference type="PROSITE" id="PS00498">
    <property type="entry name" value="TYROSINASE_2"/>
    <property type="match status" value="1"/>
</dbReference>
<reference key="1">
    <citation type="submission" date="2003-04" db="EMBL/GenBank/DDBJ databases">
        <title>Transcriptional regulation of bovine TYRP1 gene.</title>
        <authorList>
            <person name="Guibert S."/>
            <person name="Julien R."/>
            <person name="Oulmouden A."/>
        </authorList>
    </citation>
    <scope>NUCLEOTIDE SEQUENCE [MRNA]</scope>
    <source>
        <tissue>Skin</tissue>
    </source>
</reference>
<gene>
    <name type="primary">TYRP1</name>
</gene>
<keyword id="KW-0015">Albinism</keyword>
<keyword id="KW-0186">Copper</keyword>
<keyword id="KW-1015">Disulfide bond</keyword>
<keyword id="KW-0325">Glycoprotein</keyword>
<keyword id="KW-0470">Melanin biosynthesis</keyword>
<keyword id="KW-0472">Membrane</keyword>
<keyword id="KW-0479">Metal-binding</keyword>
<keyword id="KW-0503">Monooxygenase</keyword>
<keyword id="KW-0560">Oxidoreductase</keyword>
<keyword id="KW-1185">Reference proteome</keyword>
<keyword id="KW-0732">Signal</keyword>
<keyword id="KW-0812">Transmembrane</keyword>
<keyword id="KW-1133">Transmembrane helix</keyword>
<keyword id="KW-0862">Zinc</keyword>
<comment type="function">
    <text evidence="2">Plays a role in melanin biosynthesis. Catalyzes the oxidation of 5,6-dihydroxyindole-2-carboxylic acid (DHICA) into indole-5,6-quinone-2-carboxylic acid. May regulate or influence the type of melanin synthesized. Also to a lower extent, capable of hydroxylating tyrosine and producing melanin.</text>
</comment>
<comment type="catalytic activity">
    <reaction evidence="3">
        <text>2 5,6-dihydroxyindole-2-carboxylate + O2 = 2 indole-5,6-quinone-2-carboxylate + 2 H2O</text>
        <dbReference type="Rhea" id="RHEA:68388"/>
        <dbReference type="ChEBI" id="CHEBI:15377"/>
        <dbReference type="ChEBI" id="CHEBI:15379"/>
        <dbReference type="ChEBI" id="CHEBI:16875"/>
        <dbReference type="ChEBI" id="CHEBI:177869"/>
    </reaction>
    <physiologicalReaction direction="left-to-right" evidence="3">
        <dbReference type="Rhea" id="RHEA:68389"/>
    </physiologicalReaction>
</comment>
<comment type="cofactor">
    <cofactor evidence="3">
        <name>Cu(2+)</name>
        <dbReference type="ChEBI" id="CHEBI:29036"/>
    </cofactor>
    <cofactor evidence="3">
        <name>Zn(2+)</name>
        <dbReference type="ChEBI" id="CHEBI:29105"/>
    </cofactor>
    <text evidence="3">Contains bound zinc ions after heterologous expression in insect cells.</text>
</comment>
<comment type="pathway">
    <text evidence="3">Pigment biosynthesis; melanin biosynthesis.</text>
</comment>
<comment type="subunit">
    <text evidence="2 3">Monomer (By similarity). Interacts with ATP7A (By similarity). Interacts with SLC45A2 (By similarity).</text>
</comment>
<comment type="subcellular location">
    <subcellularLocation>
        <location evidence="2">Melanosome membrane</location>
        <topology evidence="2">Single-pass type I membrane protein</topology>
    </subcellularLocation>
    <text evidence="2">Located to mature stage III and IV melanosomes and apposed endosomal tubular membranes. Transported to pigmented melanosomes by the BLOC-1 complex. Proper trafficking to melanosome is regulated by SGSM2, ANKRD27, RAB9A, RAB32 and RAB38.</text>
</comment>
<comment type="PTM">
    <text evidence="2">Glycosylated.</text>
</comment>
<comment type="similarity">
    <text evidence="5">Belongs to the tyrosinase family.</text>
</comment>
<comment type="caution">
    <text evidence="2 3 5">The precise function of this protein in melanin biosynthesis is still under debate. DHICA oxidase activity is controversial. The mouse protein has been shown to have DHICA oxidase activity (By similarity). In contrast, the human protein was shown lack DHICA oxidase activity, or to have DHICA oxidase activity only in the presence of Cu(2+), but not with Zn(2+) (By similarity).</text>
</comment>
<accession>Q8WN57</accession>
<sequence>MKSPTLLSLGYMFLVLLFFQQAWAQFPRECATIEALRNGVCCPDLSPLSGPGSDRCGLSSGRGRCEVVIADSRPHSHHYPHDGRDDREGWPTRSFNRTCHCNGNFSGHNCGTCRPGWGGAACDQRVLTVRRNLLDLSTEEKNRFVRALDMAKRTTHPQFVIATRRSEEILGPDGNTPQFENISIYNYFVWTHYYSVKKTFLGAGQESFGEVDFSHEGPAFLTWHRYHLLQLERDMQEMLQDPSFSLPYWNFATGKNTCDICTDDLMGSRSNFDSTLISPNSVFSQWRVVCESLEDYDTLGTLCNSTEGGPIKRNPAGNVARPMVQRLPKPQDVAQCLEVGSYDTPPFYSNSTNSFRNTVEGYSHPTGRYDPAVRSLHNLAHLFLNGTGGQTHLSPNDPIFVLLHTFTDAVFDEWLRRYNADISTYPLENAPIGHNRQYNMVPFWPPVTNIEMFVTAPDNLGYTYEVQWPSRSFSISEIVTIAVVAALSLVAVIFAGASCLIRARSNMDEANQPLLTDQYQHYIEEYEKIHNPNQSVV</sequence>
<protein>
    <recommendedName>
        <fullName>5,6-dihydroxyindole-2-carboxylic acid oxidase</fullName>
        <shortName>DHICA oxidase</shortName>
        <ecNumber>1.14.18.-</ecNumber>
    </recommendedName>
    <alternativeName>
        <fullName>Tyrosinase-related protein 1</fullName>
        <shortName>TRP-1</shortName>
        <shortName>TRP1</shortName>
    </alternativeName>
</protein>
<proteinExistence type="evidence at transcript level"/>
<evidence type="ECO:0000250" key="1"/>
<evidence type="ECO:0000250" key="2">
    <source>
        <dbReference type="UniProtKB" id="P07147"/>
    </source>
</evidence>
<evidence type="ECO:0000250" key="3">
    <source>
        <dbReference type="UniProtKB" id="P17643"/>
    </source>
</evidence>
<evidence type="ECO:0000255" key="4"/>
<evidence type="ECO:0000305" key="5"/>